<proteinExistence type="inferred from homology"/>
<gene>
    <name evidence="1" type="primary">hisS</name>
    <name type="ordered locus">Clos_1710</name>
</gene>
<keyword id="KW-0030">Aminoacyl-tRNA synthetase</keyword>
<keyword id="KW-0067">ATP-binding</keyword>
<keyword id="KW-0963">Cytoplasm</keyword>
<keyword id="KW-0436">Ligase</keyword>
<keyword id="KW-0547">Nucleotide-binding</keyword>
<keyword id="KW-0648">Protein biosynthesis</keyword>
<keyword id="KW-1185">Reference proteome</keyword>
<name>SYH_ALKOO</name>
<comment type="catalytic activity">
    <reaction evidence="1">
        <text>tRNA(His) + L-histidine + ATP = L-histidyl-tRNA(His) + AMP + diphosphate + H(+)</text>
        <dbReference type="Rhea" id="RHEA:17313"/>
        <dbReference type="Rhea" id="RHEA-COMP:9665"/>
        <dbReference type="Rhea" id="RHEA-COMP:9689"/>
        <dbReference type="ChEBI" id="CHEBI:15378"/>
        <dbReference type="ChEBI" id="CHEBI:30616"/>
        <dbReference type="ChEBI" id="CHEBI:33019"/>
        <dbReference type="ChEBI" id="CHEBI:57595"/>
        <dbReference type="ChEBI" id="CHEBI:78442"/>
        <dbReference type="ChEBI" id="CHEBI:78527"/>
        <dbReference type="ChEBI" id="CHEBI:456215"/>
        <dbReference type="EC" id="6.1.1.21"/>
    </reaction>
</comment>
<comment type="subunit">
    <text evidence="1">Homodimer.</text>
</comment>
<comment type="subcellular location">
    <subcellularLocation>
        <location evidence="1">Cytoplasm</location>
    </subcellularLocation>
</comment>
<comment type="similarity">
    <text evidence="1">Belongs to the class-II aminoacyl-tRNA synthetase family.</text>
</comment>
<dbReference type="EC" id="6.1.1.21" evidence="1"/>
<dbReference type="EMBL" id="CP000853">
    <property type="protein sequence ID" value="ABW19250.1"/>
    <property type="molecule type" value="Genomic_DNA"/>
</dbReference>
<dbReference type="RefSeq" id="WP_012159562.1">
    <property type="nucleotide sequence ID" value="NC_009922.1"/>
</dbReference>
<dbReference type="SMR" id="A8MGM7"/>
<dbReference type="STRING" id="350688.Clos_1710"/>
<dbReference type="KEGG" id="aoe:Clos_1710"/>
<dbReference type="eggNOG" id="COG0124">
    <property type="taxonomic scope" value="Bacteria"/>
</dbReference>
<dbReference type="HOGENOM" id="CLU_025113_1_1_9"/>
<dbReference type="OrthoDB" id="9800814at2"/>
<dbReference type="Proteomes" id="UP000000269">
    <property type="component" value="Chromosome"/>
</dbReference>
<dbReference type="GO" id="GO:0005737">
    <property type="term" value="C:cytoplasm"/>
    <property type="evidence" value="ECO:0007669"/>
    <property type="project" value="UniProtKB-SubCell"/>
</dbReference>
<dbReference type="GO" id="GO:0005524">
    <property type="term" value="F:ATP binding"/>
    <property type="evidence" value="ECO:0007669"/>
    <property type="project" value="UniProtKB-UniRule"/>
</dbReference>
<dbReference type="GO" id="GO:0140096">
    <property type="term" value="F:catalytic activity, acting on a protein"/>
    <property type="evidence" value="ECO:0007669"/>
    <property type="project" value="UniProtKB-ARBA"/>
</dbReference>
<dbReference type="GO" id="GO:0004821">
    <property type="term" value="F:histidine-tRNA ligase activity"/>
    <property type="evidence" value="ECO:0007669"/>
    <property type="project" value="UniProtKB-UniRule"/>
</dbReference>
<dbReference type="GO" id="GO:0016740">
    <property type="term" value="F:transferase activity"/>
    <property type="evidence" value="ECO:0007669"/>
    <property type="project" value="UniProtKB-ARBA"/>
</dbReference>
<dbReference type="GO" id="GO:0006427">
    <property type="term" value="P:histidyl-tRNA aminoacylation"/>
    <property type="evidence" value="ECO:0007669"/>
    <property type="project" value="UniProtKB-UniRule"/>
</dbReference>
<dbReference type="CDD" id="cd00773">
    <property type="entry name" value="HisRS-like_core"/>
    <property type="match status" value="1"/>
</dbReference>
<dbReference type="CDD" id="cd00859">
    <property type="entry name" value="HisRS_anticodon"/>
    <property type="match status" value="1"/>
</dbReference>
<dbReference type="FunFam" id="3.30.930.10:FF:000005">
    <property type="entry name" value="Histidine--tRNA ligase"/>
    <property type="match status" value="1"/>
</dbReference>
<dbReference type="Gene3D" id="3.40.50.800">
    <property type="entry name" value="Anticodon-binding domain"/>
    <property type="match status" value="1"/>
</dbReference>
<dbReference type="Gene3D" id="3.30.930.10">
    <property type="entry name" value="Bira Bifunctional Protein, Domain 2"/>
    <property type="match status" value="1"/>
</dbReference>
<dbReference type="HAMAP" id="MF_00127">
    <property type="entry name" value="His_tRNA_synth"/>
    <property type="match status" value="1"/>
</dbReference>
<dbReference type="InterPro" id="IPR006195">
    <property type="entry name" value="aa-tRNA-synth_II"/>
</dbReference>
<dbReference type="InterPro" id="IPR045864">
    <property type="entry name" value="aa-tRNA-synth_II/BPL/LPL"/>
</dbReference>
<dbReference type="InterPro" id="IPR004154">
    <property type="entry name" value="Anticodon-bd"/>
</dbReference>
<dbReference type="InterPro" id="IPR036621">
    <property type="entry name" value="Anticodon-bd_dom_sf"/>
</dbReference>
<dbReference type="InterPro" id="IPR015807">
    <property type="entry name" value="His-tRNA-ligase"/>
</dbReference>
<dbReference type="InterPro" id="IPR041715">
    <property type="entry name" value="HisRS-like_core"/>
</dbReference>
<dbReference type="InterPro" id="IPR004516">
    <property type="entry name" value="HisRS/HisZ"/>
</dbReference>
<dbReference type="InterPro" id="IPR033656">
    <property type="entry name" value="HisRS_anticodon"/>
</dbReference>
<dbReference type="NCBIfam" id="TIGR00442">
    <property type="entry name" value="hisS"/>
    <property type="match status" value="1"/>
</dbReference>
<dbReference type="PANTHER" id="PTHR43707:SF1">
    <property type="entry name" value="HISTIDINE--TRNA LIGASE, MITOCHONDRIAL-RELATED"/>
    <property type="match status" value="1"/>
</dbReference>
<dbReference type="PANTHER" id="PTHR43707">
    <property type="entry name" value="HISTIDYL-TRNA SYNTHETASE"/>
    <property type="match status" value="1"/>
</dbReference>
<dbReference type="Pfam" id="PF03129">
    <property type="entry name" value="HGTP_anticodon"/>
    <property type="match status" value="1"/>
</dbReference>
<dbReference type="Pfam" id="PF13393">
    <property type="entry name" value="tRNA-synt_His"/>
    <property type="match status" value="1"/>
</dbReference>
<dbReference type="PIRSF" id="PIRSF001549">
    <property type="entry name" value="His-tRNA_synth"/>
    <property type="match status" value="1"/>
</dbReference>
<dbReference type="SUPFAM" id="SSF52954">
    <property type="entry name" value="Class II aaRS ABD-related"/>
    <property type="match status" value="1"/>
</dbReference>
<dbReference type="SUPFAM" id="SSF55681">
    <property type="entry name" value="Class II aaRS and biotin synthetases"/>
    <property type="match status" value="1"/>
</dbReference>
<dbReference type="PROSITE" id="PS50862">
    <property type="entry name" value="AA_TRNA_LIGASE_II"/>
    <property type="match status" value="1"/>
</dbReference>
<accession>A8MGM7</accession>
<evidence type="ECO:0000255" key="1">
    <source>
        <dbReference type="HAMAP-Rule" id="MF_00127"/>
    </source>
</evidence>
<sequence length="421" mass="47257">MLTNGPRGTKDVLPSEAYKWHYVEGVFKEVAKRFGFEEIRTPVFEHTELFERGVGDTTDVVEKEMYTFLDRGGRSITLKPEGTAPAARSFIEHKLYADTQPTKMFYITPVFRYERPQAGRFREHHQFGVEAFGASSASVDAEVINLAMSVYEAFGVKKLELRINSVGCPKCRAEYNKVLRAFLSSRLDQLCGTCQNRFERNPIRIIDCKSDSCQAQLTDVPLMMDHLCGECQDHFEELKKYLEASGLHYVIDPRIVRGLDYYTKTAFEIITEEAGKKGTVCGGGRYDKLVEDCGGPSTPGVGFGMGIERAILALEDQGIEIPKPEGLDVFIVTMGEKASYEGFKLLTALRRAGFSGDKDHLDRSVKAQFKYANKVNASYTIIIGENELEKGIAKLKNMANSEEIEIELKDITKLKEILSGR</sequence>
<protein>
    <recommendedName>
        <fullName evidence="1">Histidine--tRNA ligase</fullName>
        <ecNumber evidence="1">6.1.1.21</ecNumber>
    </recommendedName>
    <alternativeName>
        <fullName evidence="1">Histidyl-tRNA synthetase</fullName>
        <shortName evidence="1">HisRS</shortName>
    </alternativeName>
</protein>
<organism>
    <name type="scientific">Alkaliphilus oremlandii (strain OhILAs)</name>
    <name type="common">Clostridium oremlandii (strain OhILAs)</name>
    <dbReference type="NCBI Taxonomy" id="350688"/>
    <lineage>
        <taxon>Bacteria</taxon>
        <taxon>Bacillati</taxon>
        <taxon>Bacillota</taxon>
        <taxon>Clostridia</taxon>
        <taxon>Peptostreptococcales</taxon>
        <taxon>Natronincolaceae</taxon>
        <taxon>Alkaliphilus</taxon>
    </lineage>
</organism>
<reference key="1">
    <citation type="submission" date="2007-10" db="EMBL/GenBank/DDBJ databases">
        <title>Complete genome of Alkaliphilus oremlandii OhILAs.</title>
        <authorList>
            <person name="Copeland A."/>
            <person name="Lucas S."/>
            <person name="Lapidus A."/>
            <person name="Barry K."/>
            <person name="Detter J.C."/>
            <person name="Glavina del Rio T."/>
            <person name="Hammon N."/>
            <person name="Israni S."/>
            <person name="Dalin E."/>
            <person name="Tice H."/>
            <person name="Pitluck S."/>
            <person name="Chain P."/>
            <person name="Malfatti S."/>
            <person name="Shin M."/>
            <person name="Vergez L."/>
            <person name="Schmutz J."/>
            <person name="Larimer F."/>
            <person name="Land M."/>
            <person name="Hauser L."/>
            <person name="Kyrpides N."/>
            <person name="Mikhailova N."/>
            <person name="Stolz J.F."/>
            <person name="Dawson A."/>
            <person name="Fisher E."/>
            <person name="Crable B."/>
            <person name="Perera E."/>
            <person name="Lisak J."/>
            <person name="Ranganathan M."/>
            <person name="Basu P."/>
            <person name="Richardson P."/>
        </authorList>
    </citation>
    <scope>NUCLEOTIDE SEQUENCE [LARGE SCALE GENOMIC DNA]</scope>
    <source>
        <strain>OhILAs</strain>
    </source>
</reference>
<feature type="chain" id="PRO_1000057823" description="Histidine--tRNA ligase">
    <location>
        <begin position="1"/>
        <end position="421"/>
    </location>
</feature>